<accession>Q5L0R4</accession>
<proteinExistence type="inferred from homology"/>
<sequence length="61" mass="6913">MAKCFITGKKKSFGNSRSHAMNASRRTWKANLQKVRILVDGKPKRVWVSARALKSGKVKRV</sequence>
<evidence type="ECO:0000255" key="1">
    <source>
        <dbReference type="HAMAP-Rule" id="MF_00373"/>
    </source>
</evidence>
<evidence type="ECO:0000305" key="2"/>
<feature type="chain" id="PRO_0000178475" description="Large ribosomal subunit protein bL28">
    <location>
        <begin position="1"/>
        <end position="61"/>
    </location>
</feature>
<gene>
    <name evidence="1" type="primary">rpmB</name>
    <name type="ordered locus">GK1181</name>
</gene>
<reference key="1">
    <citation type="journal article" date="2004" name="Nucleic Acids Res.">
        <title>Thermoadaptation trait revealed by the genome sequence of thermophilic Geobacillus kaustophilus.</title>
        <authorList>
            <person name="Takami H."/>
            <person name="Takaki Y."/>
            <person name="Chee G.-J."/>
            <person name="Nishi S."/>
            <person name="Shimamura S."/>
            <person name="Suzuki H."/>
            <person name="Matsui S."/>
            <person name="Uchiyama I."/>
        </authorList>
    </citation>
    <scope>NUCLEOTIDE SEQUENCE [LARGE SCALE GENOMIC DNA]</scope>
    <source>
        <strain>HTA426</strain>
    </source>
</reference>
<protein>
    <recommendedName>
        <fullName evidence="1">Large ribosomal subunit protein bL28</fullName>
    </recommendedName>
    <alternativeName>
        <fullName evidence="2">50S ribosomal protein L28</fullName>
    </alternativeName>
</protein>
<organism>
    <name type="scientific">Geobacillus kaustophilus (strain HTA426)</name>
    <dbReference type="NCBI Taxonomy" id="235909"/>
    <lineage>
        <taxon>Bacteria</taxon>
        <taxon>Bacillati</taxon>
        <taxon>Bacillota</taxon>
        <taxon>Bacilli</taxon>
        <taxon>Bacillales</taxon>
        <taxon>Anoxybacillaceae</taxon>
        <taxon>Geobacillus</taxon>
        <taxon>Geobacillus thermoleovorans group</taxon>
    </lineage>
</organism>
<name>RL28_GEOKA</name>
<keyword id="KW-1185">Reference proteome</keyword>
<keyword id="KW-0687">Ribonucleoprotein</keyword>
<keyword id="KW-0689">Ribosomal protein</keyword>
<comment type="similarity">
    <text evidence="1">Belongs to the bacterial ribosomal protein bL28 family.</text>
</comment>
<dbReference type="EMBL" id="BA000043">
    <property type="protein sequence ID" value="BAD75466.1"/>
    <property type="molecule type" value="Genomic_DNA"/>
</dbReference>
<dbReference type="RefSeq" id="WP_011230681.1">
    <property type="nucleotide sequence ID" value="NC_006510.1"/>
</dbReference>
<dbReference type="SMR" id="Q5L0R4"/>
<dbReference type="STRING" id="235909.GK1181"/>
<dbReference type="GeneID" id="32063074"/>
<dbReference type="KEGG" id="gka:GK1181"/>
<dbReference type="eggNOG" id="COG0227">
    <property type="taxonomic scope" value="Bacteria"/>
</dbReference>
<dbReference type="HOGENOM" id="CLU_064548_7_1_9"/>
<dbReference type="Proteomes" id="UP000001172">
    <property type="component" value="Chromosome"/>
</dbReference>
<dbReference type="GO" id="GO:1990904">
    <property type="term" value="C:ribonucleoprotein complex"/>
    <property type="evidence" value="ECO:0007669"/>
    <property type="project" value="UniProtKB-KW"/>
</dbReference>
<dbReference type="GO" id="GO:0005840">
    <property type="term" value="C:ribosome"/>
    <property type="evidence" value="ECO:0007669"/>
    <property type="project" value="UniProtKB-KW"/>
</dbReference>
<dbReference type="GO" id="GO:0003735">
    <property type="term" value="F:structural constituent of ribosome"/>
    <property type="evidence" value="ECO:0007669"/>
    <property type="project" value="InterPro"/>
</dbReference>
<dbReference type="GO" id="GO:0006412">
    <property type="term" value="P:translation"/>
    <property type="evidence" value="ECO:0007669"/>
    <property type="project" value="UniProtKB-UniRule"/>
</dbReference>
<dbReference type="Gene3D" id="2.30.170.40">
    <property type="entry name" value="Ribosomal protein L28/L24"/>
    <property type="match status" value="1"/>
</dbReference>
<dbReference type="HAMAP" id="MF_00373">
    <property type="entry name" value="Ribosomal_bL28"/>
    <property type="match status" value="1"/>
</dbReference>
<dbReference type="InterPro" id="IPR050096">
    <property type="entry name" value="Bacterial_rp_bL28"/>
</dbReference>
<dbReference type="InterPro" id="IPR026569">
    <property type="entry name" value="Ribosomal_bL28"/>
</dbReference>
<dbReference type="InterPro" id="IPR034704">
    <property type="entry name" value="Ribosomal_bL28/bL31-like_sf"/>
</dbReference>
<dbReference type="InterPro" id="IPR001383">
    <property type="entry name" value="Ribosomal_bL28_bact-type"/>
</dbReference>
<dbReference type="InterPro" id="IPR037147">
    <property type="entry name" value="Ribosomal_bL28_sf"/>
</dbReference>
<dbReference type="NCBIfam" id="TIGR00009">
    <property type="entry name" value="L28"/>
    <property type="match status" value="1"/>
</dbReference>
<dbReference type="PANTHER" id="PTHR39080">
    <property type="entry name" value="50S RIBOSOMAL PROTEIN L28"/>
    <property type="match status" value="1"/>
</dbReference>
<dbReference type="PANTHER" id="PTHR39080:SF1">
    <property type="entry name" value="LARGE RIBOSOMAL SUBUNIT PROTEIN BL28A"/>
    <property type="match status" value="1"/>
</dbReference>
<dbReference type="Pfam" id="PF00830">
    <property type="entry name" value="Ribosomal_L28"/>
    <property type="match status" value="1"/>
</dbReference>
<dbReference type="SUPFAM" id="SSF143800">
    <property type="entry name" value="L28p-like"/>
    <property type="match status" value="1"/>
</dbReference>